<sequence>MRQYLNLCQRIIDQGHWVENERTGKRCLTVINADLTYDVANNQFPLITTRKSYWKAAIAEFLGYIRGYDNAADFRKLGTKTWDANANENQAWLNNPVRKGTDDMGRVYGVQGRRWRKPNGETVDQLRKIVNNLSKGIDDRGEILTFFNPGEIDLGCLRPCMHTHTFSLLGDTLYLTSYQRSCDVPLGLNFNQIQVFTFLALMAQITGKKAGQAYHKIINAHIYEDQFELMRDVQLKREPFPLPRLEINPDIKTLEDLETWVTMDDFKVIGYQCHEAIKYPFSV</sequence>
<accession>B0UWT7</accession>
<gene>
    <name evidence="1" type="primary">thyA</name>
    <name type="ordered locus">HSM_0391</name>
</gene>
<evidence type="ECO:0000255" key="1">
    <source>
        <dbReference type="HAMAP-Rule" id="MF_00008"/>
    </source>
</evidence>
<feature type="chain" id="PRO_1000073877" description="Thymidylate synthase">
    <location>
        <begin position="1"/>
        <end position="283"/>
    </location>
</feature>
<feature type="active site" description="Nucleophile" evidence="1">
    <location>
        <position position="160"/>
    </location>
</feature>
<feature type="binding site" evidence="1">
    <location>
        <position position="22"/>
    </location>
    <ligand>
        <name>dUMP</name>
        <dbReference type="ChEBI" id="CHEBI:246422"/>
    </ligand>
</feature>
<feature type="binding site" evidence="1">
    <location>
        <begin position="180"/>
        <end position="183"/>
    </location>
    <ligand>
        <name>dUMP</name>
        <dbReference type="ChEBI" id="CHEBI:246422"/>
    </ligand>
</feature>
<feature type="binding site" evidence="1">
    <location>
        <position position="183"/>
    </location>
    <ligand>
        <name>(6R)-5,10-methylene-5,6,7,8-tetrahydrofolate</name>
        <dbReference type="ChEBI" id="CHEBI:15636"/>
    </ligand>
</feature>
<feature type="binding site" evidence="1">
    <location>
        <position position="191"/>
    </location>
    <ligand>
        <name>dUMP</name>
        <dbReference type="ChEBI" id="CHEBI:246422"/>
    </ligand>
</feature>
<feature type="binding site" evidence="1">
    <location>
        <begin position="221"/>
        <end position="223"/>
    </location>
    <ligand>
        <name>dUMP</name>
        <dbReference type="ChEBI" id="CHEBI:246422"/>
    </ligand>
</feature>
<feature type="binding site" evidence="1">
    <location>
        <position position="282"/>
    </location>
    <ligand>
        <name>(6R)-5,10-methylene-5,6,7,8-tetrahydrofolate</name>
        <dbReference type="ChEBI" id="CHEBI:15636"/>
    </ligand>
</feature>
<name>TYSY_HISS2</name>
<reference key="1">
    <citation type="submission" date="2008-02" db="EMBL/GenBank/DDBJ databases">
        <title>Complete sequence of Haemophilus somnus 2336.</title>
        <authorList>
            <consortium name="US DOE Joint Genome Institute"/>
            <person name="Siddaramappa S."/>
            <person name="Duncan A.J."/>
            <person name="Challacombe J.F."/>
            <person name="Rainey D."/>
            <person name="Gillaspy A.F."/>
            <person name="Carson M."/>
            <person name="Gipson J."/>
            <person name="Gipson M."/>
            <person name="Bruce D."/>
            <person name="Detter J.C."/>
            <person name="Han C.S."/>
            <person name="Land M."/>
            <person name="Tapia R."/>
            <person name="Thompson L.S."/>
            <person name="Orvis J."/>
            <person name="Zaitshik J."/>
            <person name="Barnes G."/>
            <person name="Brettin T.S."/>
            <person name="Dyer D.W."/>
            <person name="Inzana T.J."/>
        </authorList>
    </citation>
    <scope>NUCLEOTIDE SEQUENCE [LARGE SCALE GENOMIC DNA]</scope>
    <source>
        <strain>2336</strain>
    </source>
</reference>
<dbReference type="EC" id="2.1.1.45" evidence="1"/>
<dbReference type="EMBL" id="CP000947">
    <property type="protein sequence ID" value="ACA32031.1"/>
    <property type="molecule type" value="Genomic_DNA"/>
</dbReference>
<dbReference type="RefSeq" id="WP_011609765.1">
    <property type="nucleotide sequence ID" value="NC_010519.1"/>
</dbReference>
<dbReference type="SMR" id="B0UWT7"/>
<dbReference type="STRING" id="228400.HSM_0391"/>
<dbReference type="GeneID" id="31486671"/>
<dbReference type="KEGG" id="hsm:HSM_0391"/>
<dbReference type="HOGENOM" id="CLU_021669_0_0_6"/>
<dbReference type="UniPathway" id="UPA00575"/>
<dbReference type="GO" id="GO:0005829">
    <property type="term" value="C:cytosol"/>
    <property type="evidence" value="ECO:0007669"/>
    <property type="project" value="TreeGrafter"/>
</dbReference>
<dbReference type="GO" id="GO:0004799">
    <property type="term" value="F:thymidylate synthase activity"/>
    <property type="evidence" value="ECO:0007669"/>
    <property type="project" value="UniProtKB-UniRule"/>
</dbReference>
<dbReference type="GO" id="GO:0006231">
    <property type="term" value="P:dTMP biosynthetic process"/>
    <property type="evidence" value="ECO:0007669"/>
    <property type="project" value="UniProtKB-UniRule"/>
</dbReference>
<dbReference type="GO" id="GO:0006235">
    <property type="term" value="P:dTTP biosynthetic process"/>
    <property type="evidence" value="ECO:0007669"/>
    <property type="project" value="UniProtKB-UniRule"/>
</dbReference>
<dbReference type="GO" id="GO:0032259">
    <property type="term" value="P:methylation"/>
    <property type="evidence" value="ECO:0007669"/>
    <property type="project" value="UniProtKB-KW"/>
</dbReference>
<dbReference type="CDD" id="cd00351">
    <property type="entry name" value="TS_Pyrimidine_HMase"/>
    <property type="match status" value="1"/>
</dbReference>
<dbReference type="FunFam" id="3.30.572.10:FF:000003">
    <property type="entry name" value="Thymidylate synthase"/>
    <property type="match status" value="1"/>
</dbReference>
<dbReference type="Gene3D" id="3.30.572.10">
    <property type="entry name" value="Thymidylate synthase/dCMP hydroxymethylase domain"/>
    <property type="match status" value="1"/>
</dbReference>
<dbReference type="HAMAP" id="MF_00008">
    <property type="entry name" value="Thymidy_synth_bact"/>
    <property type="match status" value="1"/>
</dbReference>
<dbReference type="InterPro" id="IPR045097">
    <property type="entry name" value="Thymidate_synth/dCMP_Mease"/>
</dbReference>
<dbReference type="InterPro" id="IPR023451">
    <property type="entry name" value="Thymidate_synth/dCMP_Mease_dom"/>
</dbReference>
<dbReference type="InterPro" id="IPR036926">
    <property type="entry name" value="Thymidate_synth/dCMP_Mease_sf"/>
</dbReference>
<dbReference type="InterPro" id="IPR000398">
    <property type="entry name" value="Thymidylate_synthase"/>
</dbReference>
<dbReference type="InterPro" id="IPR020940">
    <property type="entry name" value="Thymidylate_synthase_AS"/>
</dbReference>
<dbReference type="NCBIfam" id="NF002498">
    <property type="entry name" value="PRK01827.1-4"/>
    <property type="match status" value="1"/>
</dbReference>
<dbReference type="NCBIfam" id="TIGR03284">
    <property type="entry name" value="thym_sym"/>
    <property type="match status" value="1"/>
</dbReference>
<dbReference type="PANTHER" id="PTHR11548:SF9">
    <property type="entry name" value="THYMIDYLATE SYNTHASE"/>
    <property type="match status" value="1"/>
</dbReference>
<dbReference type="PANTHER" id="PTHR11548">
    <property type="entry name" value="THYMIDYLATE SYNTHASE 1"/>
    <property type="match status" value="1"/>
</dbReference>
<dbReference type="Pfam" id="PF00303">
    <property type="entry name" value="Thymidylat_synt"/>
    <property type="match status" value="1"/>
</dbReference>
<dbReference type="PRINTS" id="PR00108">
    <property type="entry name" value="THYMDSNTHASE"/>
</dbReference>
<dbReference type="SUPFAM" id="SSF55831">
    <property type="entry name" value="Thymidylate synthase/dCMP hydroxymethylase"/>
    <property type="match status" value="1"/>
</dbReference>
<dbReference type="PROSITE" id="PS00091">
    <property type="entry name" value="THYMIDYLATE_SYNTHASE"/>
    <property type="match status" value="1"/>
</dbReference>
<organism>
    <name type="scientific">Histophilus somni (strain 2336)</name>
    <name type="common">Haemophilus somnus</name>
    <dbReference type="NCBI Taxonomy" id="228400"/>
    <lineage>
        <taxon>Bacteria</taxon>
        <taxon>Pseudomonadati</taxon>
        <taxon>Pseudomonadota</taxon>
        <taxon>Gammaproteobacteria</taxon>
        <taxon>Pasteurellales</taxon>
        <taxon>Pasteurellaceae</taxon>
        <taxon>Histophilus</taxon>
    </lineage>
</organism>
<protein>
    <recommendedName>
        <fullName evidence="1">Thymidylate synthase</fullName>
        <shortName evidence="1">TS</shortName>
        <shortName evidence="1">TSase</shortName>
        <ecNumber evidence="1">2.1.1.45</ecNumber>
    </recommendedName>
</protein>
<keyword id="KW-0963">Cytoplasm</keyword>
<keyword id="KW-0489">Methyltransferase</keyword>
<keyword id="KW-0545">Nucleotide biosynthesis</keyword>
<keyword id="KW-0808">Transferase</keyword>
<comment type="function">
    <text evidence="1">Catalyzes the reductive methylation of 2'-deoxyuridine-5'-monophosphate (dUMP) to 2'-deoxythymidine-5'-monophosphate (dTMP) while utilizing 5,10-methylenetetrahydrofolate (mTHF) as the methyl donor and reductant in the reaction, yielding dihydrofolate (DHF) as a by-product. This enzymatic reaction provides an intracellular de novo source of dTMP, an essential precursor for DNA biosynthesis.</text>
</comment>
<comment type="catalytic activity">
    <reaction evidence="1">
        <text>dUMP + (6R)-5,10-methylene-5,6,7,8-tetrahydrofolate = 7,8-dihydrofolate + dTMP</text>
        <dbReference type="Rhea" id="RHEA:12104"/>
        <dbReference type="ChEBI" id="CHEBI:15636"/>
        <dbReference type="ChEBI" id="CHEBI:57451"/>
        <dbReference type="ChEBI" id="CHEBI:63528"/>
        <dbReference type="ChEBI" id="CHEBI:246422"/>
        <dbReference type="EC" id="2.1.1.45"/>
    </reaction>
</comment>
<comment type="pathway">
    <text evidence="1">Pyrimidine metabolism; dTTP biosynthesis.</text>
</comment>
<comment type="subunit">
    <text evidence="1">Homodimer.</text>
</comment>
<comment type="subcellular location">
    <subcellularLocation>
        <location evidence="1">Cytoplasm</location>
    </subcellularLocation>
</comment>
<comment type="similarity">
    <text evidence="1">Belongs to the thymidylate synthase family. Bacterial-type ThyA subfamily.</text>
</comment>
<proteinExistence type="inferred from homology"/>